<organism>
    <name type="scientific">Salmonella typhi</name>
    <dbReference type="NCBI Taxonomy" id="90370"/>
    <lineage>
        <taxon>Bacteria</taxon>
        <taxon>Pseudomonadati</taxon>
        <taxon>Pseudomonadota</taxon>
        <taxon>Gammaproteobacteria</taxon>
        <taxon>Enterobacterales</taxon>
        <taxon>Enterobacteriaceae</taxon>
        <taxon>Salmonella</taxon>
    </lineage>
</organism>
<feature type="chain" id="PRO_0000390231" description="NADH-quinone oxidoreductase subunit K">
    <location>
        <begin position="1"/>
        <end position="100"/>
    </location>
</feature>
<feature type="transmembrane region" description="Helical" evidence="1">
    <location>
        <begin position="4"/>
        <end position="24"/>
    </location>
</feature>
<feature type="transmembrane region" description="Helical" evidence="1">
    <location>
        <begin position="28"/>
        <end position="48"/>
    </location>
</feature>
<feature type="transmembrane region" description="Helical" evidence="1">
    <location>
        <begin position="60"/>
        <end position="80"/>
    </location>
</feature>
<accession>Q8XFA3</accession>
<accession>Q7AMM0</accession>
<protein>
    <recommendedName>
        <fullName evidence="1">NADH-quinone oxidoreductase subunit K</fullName>
        <ecNumber evidence="1">7.1.1.-</ecNumber>
    </recommendedName>
    <alternativeName>
        <fullName evidence="1">NADH dehydrogenase I subunit K</fullName>
    </alternativeName>
    <alternativeName>
        <fullName evidence="1">NDH-1 subunit K</fullName>
    </alternativeName>
</protein>
<name>NUOK_SALTI</name>
<keyword id="KW-0997">Cell inner membrane</keyword>
<keyword id="KW-1003">Cell membrane</keyword>
<keyword id="KW-0472">Membrane</keyword>
<keyword id="KW-0520">NAD</keyword>
<keyword id="KW-0874">Quinone</keyword>
<keyword id="KW-1278">Translocase</keyword>
<keyword id="KW-0812">Transmembrane</keyword>
<keyword id="KW-1133">Transmembrane helix</keyword>
<keyword id="KW-0813">Transport</keyword>
<keyword id="KW-0830">Ubiquinone</keyword>
<reference key="1">
    <citation type="journal article" date="2003" name="J. Bacteriol.">
        <title>Comparative genomics of Salmonella enterica serovar Typhi strains Ty2 and CT18.</title>
        <authorList>
            <person name="Deng W."/>
            <person name="Liou S.-R."/>
            <person name="Plunkett G. III"/>
            <person name="Mayhew G.F."/>
            <person name="Rose D.J."/>
            <person name="Burland V."/>
            <person name="Kodoyianni V."/>
            <person name="Schwartz D.C."/>
            <person name="Blattner F.R."/>
        </authorList>
    </citation>
    <scope>NUCLEOTIDE SEQUENCE [LARGE SCALE GENOMIC DNA]</scope>
    <source>
        <strain>ATCC 700931 / Ty2</strain>
    </source>
</reference>
<reference key="2">
    <citation type="journal article" date="2001" name="Nature">
        <title>Complete genome sequence of a multiple drug resistant Salmonella enterica serovar Typhi CT18.</title>
        <authorList>
            <person name="Parkhill J."/>
            <person name="Dougan G."/>
            <person name="James K.D."/>
            <person name="Thomson N.R."/>
            <person name="Pickard D."/>
            <person name="Wain J."/>
            <person name="Churcher C.M."/>
            <person name="Mungall K.L."/>
            <person name="Bentley S.D."/>
            <person name="Holden M.T.G."/>
            <person name="Sebaihia M."/>
            <person name="Baker S."/>
            <person name="Basham D."/>
            <person name="Brooks K."/>
            <person name="Chillingworth T."/>
            <person name="Connerton P."/>
            <person name="Cronin A."/>
            <person name="Davis P."/>
            <person name="Davies R.M."/>
            <person name="Dowd L."/>
            <person name="White N."/>
            <person name="Farrar J."/>
            <person name="Feltwell T."/>
            <person name="Hamlin N."/>
            <person name="Haque A."/>
            <person name="Hien T.T."/>
            <person name="Holroyd S."/>
            <person name="Jagels K."/>
            <person name="Krogh A."/>
            <person name="Larsen T.S."/>
            <person name="Leather S."/>
            <person name="Moule S."/>
            <person name="O'Gaora P."/>
            <person name="Parry C."/>
            <person name="Quail M.A."/>
            <person name="Rutherford K.M."/>
            <person name="Simmonds M."/>
            <person name="Skelton J."/>
            <person name="Stevens K."/>
            <person name="Whitehead S."/>
            <person name="Barrell B.G."/>
        </authorList>
    </citation>
    <scope>NUCLEOTIDE SEQUENCE [LARGE SCALE GENOMIC DNA]</scope>
    <source>
        <strain>CT18</strain>
    </source>
</reference>
<dbReference type="EC" id="7.1.1.-" evidence="1"/>
<dbReference type="EMBL" id="AE014613">
    <property type="protein sequence ID" value="AAO68251.1"/>
    <property type="molecule type" value="Genomic_DNA"/>
</dbReference>
<dbReference type="EMBL" id="AL513382">
    <property type="protein sequence ID" value="CAD07551.1"/>
    <property type="molecule type" value="Genomic_DNA"/>
</dbReference>
<dbReference type="RefSeq" id="NP_456861.1">
    <property type="nucleotide sequence ID" value="NC_003198.1"/>
</dbReference>
<dbReference type="RefSeq" id="WP_000612687.1">
    <property type="nucleotide sequence ID" value="NZ_WSUR01000039.1"/>
</dbReference>
<dbReference type="SMR" id="Q8XFA3"/>
<dbReference type="STRING" id="220341.gene:17586448"/>
<dbReference type="KEGG" id="stt:t0545"/>
<dbReference type="KEGG" id="sty:STY2549"/>
<dbReference type="PATRIC" id="fig|220341.7.peg.2579"/>
<dbReference type="eggNOG" id="COG0713">
    <property type="taxonomic scope" value="Bacteria"/>
</dbReference>
<dbReference type="HOGENOM" id="CLU_144724_0_1_6"/>
<dbReference type="OMA" id="IPMEHGL"/>
<dbReference type="OrthoDB" id="9801357at2"/>
<dbReference type="Proteomes" id="UP000000541">
    <property type="component" value="Chromosome"/>
</dbReference>
<dbReference type="Proteomes" id="UP000002670">
    <property type="component" value="Chromosome"/>
</dbReference>
<dbReference type="GO" id="GO:0030964">
    <property type="term" value="C:NADH dehydrogenase complex"/>
    <property type="evidence" value="ECO:0007669"/>
    <property type="project" value="TreeGrafter"/>
</dbReference>
<dbReference type="GO" id="GO:0005886">
    <property type="term" value="C:plasma membrane"/>
    <property type="evidence" value="ECO:0007669"/>
    <property type="project" value="UniProtKB-SubCell"/>
</dbReference>
<dbReference type="GO" id="GO:0050136">
    <property type="term" value="F:NADH:ubiquinone reductase (non-electrogenic) activity"/>
    <property type="evidence" value="ECO:0007669"/>
    <property type="project" value="UniProtKB-UniRule"/>
</dbReference>
<dbReference type="GO" id="GO:0048038">
    <property type="term" value="F:quinone binding"/>
    <property type="evidence" value="ECO:0007669"/>
    <property type="project" value="UniProtKB-KW"/>
</dbReference>
<dbReference type="GO" id="GO:0042773">
    <property type="term" value="P:ATP synthesis coupled electron transport"/>
    <property type="evidence" value="ECO:0007669"/>
    <property type="project" value="InterPro"/>
</dbReference>
<dbReference type="FunFam" id="1.10.287.3510:FF:000001">
    <property type="entry name" value="NADH-quinone oxidoreductase subunit K"/>
    <property type="match status" value="1"/>
</dbReference>
<dbReference type="Gene3D" id="1.10.287.3510">
    <property type="match status" value="1"/>
</dbReference>
<dbReference type="HAMAP" id="MF_01456">
    <property type="entry name" value="NDH1_NuoK"/>
    <property type="match status" value="1"/>
</dbReference>
<dbReference type="InterPro" id="IPR001133">
    <property type="entry name" value="NADH_UbQ_OxRdtase_chain4L/K"/>
</dbReference>
<dbReference type="InterPro" id="IPR039428">
    <property type="entry name" value="NUOK/Mnh_C1-like"/>
</dbReference>
<dbReference type="NCBIfam" id="NF004319">
    <property type="entry name" value="PRK05715.1-1"/>
    <property type="match status" value="1"/>
</dbReference>
<dbReference type="NCBIfam" id="NF004320">
    <property type="entry name" value="PRK05715.1-2"/>
    <property type="match status" value="1"/>
</dbReference>
<dbReference type="PANTHER" id="PTHR11434:SF16">
    <property type="entry name" value="NADH-UBIQUINONE OXIDOREDUCTASE CHAIN 4L"/>
    <property type="match status" value="1"/>
</dbReference>
<dbReference type="PANTHER" id="PTHR11434">
    <property type="entry name" value="NADH-UBIQUINONE OXIDOREDUCTASE SUBUNIT ND4L"/>
    <property type="match status" value="1"/>
</dbReference>
<dbReference type="Pfam" id="PF00420">
    <property type="entry name" value="Oxidored_q2"/>
    <property type="match status" value="1"/>
</dbReference>
<comment type="function">
    <text evidence="1">NDH-1 shuttles electrons from NADH, via FMN and iron-sulfur (Fe-S) centers, to quinones in the respiratory chain. The immediate electron acceptor for the enzyme in this species is believed to be ubiquinone. Couples the redox reaction to proton translocation (for every two electrons transferred, four hydrogen ions are translocated across the cytoplasmic membrane), and thus conserves the redox energy in a proton gradient.</text>
</comment>
<comment type="catalytic activity">
    <reaction evidence="1">
        <text>a quinone + NADH + 5 H(+)(in) = a quinol + NAD(+) + 4 H(+)(out)</text>
        <dbReference type="Rhea" id="RHEA:57888"/>
        <dbReference type="ChEBI" id="CHEBI:15378"/>
        <dbReference type="ChEBI" id="CHEBI:24646"/>
        <dbReference type="ChEBI" id="CHEBI:57540"/>
        <dbReference type="ChEBI" id="CHEBI:57945"/>
        <dbReference type="ChEBI" id="CHEBI:132124"/>
    </reaction>
</comment>
<comment type="subunit">
    <text evidence="1">NDH-1 is composed of 13 different subunits. Subunits NuoA, H, J, K, L, M, N constitute the membrane sector of the complex.</text>
</comment>
<comment type="subcellular location">
    <subcellularLocation>
        <location evidence="1">Cell inner membrane</location>
        <topology evidence="1">Multi-pass membrane protein</topology>
    </subcellularLocation>
</comment>
<comment type="similarity">
    <text evidence="1">Belongs to the complex I subunit 4L family.</text>
</comment>
<proteinExistence type="inferred from homology"/>
<sequence>MIPLTHGLILAAILFVLGLTGLVIRRNLLFMLIGLEIMINASALAFVVAGSYWGQTDGQVMYILAISLAAAEASIGLALLLQLHRRRQNLNIDSVSEMRG</sequence>
<evidence type="ECO:0000255" key="1">
    <source>
        <dbReference type="HAMAP-Rule" id="MF_01456"/>
    </source>
</evidence>
<gene>
    <name evidence="1" type="primary">nuoK</name>
    <name type="ordered locus">STY2549</name>
    <name type="ordered locus">t0545</name>
</gene>